<sequence>MAKVIGIDLGTTNSCVAVMEGSSAKVIENSEGMRTTPSMVAFTQDGERLVGQSAKRQAVTNPTNTLFAIKRLIGRSYDDPTTQKDKGMVPYDIVKAPNGDAWVEAHGEKYSPSQISAFILQKMKETAESYLGEKVEKAVITVPAYFNDAQRQATKDAGKIAGLEVLRIINEPTAAALAYGLDKKEGELIAVYDLGGGTFDVSILEIGDGVFEVKSTNGDTFLGGEDFDMRLVNYLADEFKKENGIDLRGDKLALQRLKEAAEKAKIELSSASQTEVNLPFITADASGPKHLTMKITRSKLEALVADLIQRTIDPCKAALKDAGVTAGQINEIVLVGGQSRMPKIREAVKQFFGKEPNMSVNPDEVVAMGAAIQAGVLQGDVKDVLLLDVTPLSLGIETLGGVFTRLIERNTTIPTKKAQTFSTAEDNQSAVTIRVFQGEREMAADNKLLGQFDLVGIPAAPRGVPQIEVAFDIDANGIVNVSAKDKATNKEQTIRIEASGGLSEADIEQMVKDAEAHAEEDKKRREEVETRNHAEALANATEKTLQENADKIGGDVKADVEAALEALRTALKEGSSEDIKAKMEALTQTSMKMGEALYKSAQAEAESEAAGGTDASGDDVVDADFEEVDDDKKDQDKSA</sequence>
<accession>A7HZ39</accession>
<gene>
    <name evidence="1" type="primary">dnaK</name>
    <name type="ordered locus">Plav_3574</name>
</gene>
<protein>
    <recommendedName>
        <fullName evidence="1">Chaperone protein DnaK</fullName>
    </recommendedName>
    <alternativeName>
        <fullName evidence="1">HSP70</fullName>
    </alternativeName>
    <alternativeName>
        <fullName evidence="1">Heat shock 70 kDa protein</fullName>
    </alternativeName>
    <alternativeName>
        <fullName evidence="1">Heat shock protein 70</fullName>
    </alternativeName>
</protein>
<organism>
    <name type="scientific">Parvibaculum lavamentivorans (strain DS-1 / DSM 13023 / NCIMB 13966)</name>
    <dbReference type="NCBI Taxonomy" id="402881"/>
    <lineage>
        <taxon>Bacteria</taxon>
        <taxon>Pseudomonadati</taxon>
        <taxon>Pseudomonadota</taxon>
        <taxon>Alphaproteobacteria</taxon>
        <taxon>Hyphomicrobiales</taxon>
        <taxon>Parvibaculaceae</taxon>
        <taxon>Parvibaculum</taxon>
    </lineage>
</organism>
<keyword id="KW-0067">ATP-binding</keyword>
<keyword id="KW-0143">Chaperone</keyword>
<keyword id="KW-0547">Nucleotide-binding</keyword>
<keyword id="KW-0597">Phosphoprotein</keyword>
<keyword id="KW-1185">Reference proteome</keyword>
<keyword id="KW-0346">Stress response</keyword>
<proteinExistence type="inferred from homology"/>
<feature type="chain" id="PRO_1000072039" description="Chaperone protein DnaK">
    <location>
        <begin position="1"/>
        <end position="639"/>
    </location>
</feature>
<feature type="region of interest" description="Disordered" evidence="2">
    <location>
        <begin position="597"/>
        <end position="639"/>
    </location>
</feature>
<feature type="compositionally biased region" description="Low complexity" evidence="2">
    <location>
        <begin position="600"/>
        <end position="615"/>
    </location>
</feature>
<feature type="compositionally biased region" description="Acidic residues" evidence="2">
    <location>
        <begin position="616"/>
        <end position="629"/>
    </location>
</feature>
<feature type="compositionally biased region" description="Basic and acidic residues" evidence="2">
    <location>
        <begin position="630"/>
        <end position="639"/>
    </location>
</feature>
<feature type="modified residue" description="Phosphothreonine; by autocatalysis" evidence="1">
    <location>
        <position position="198"/>
    </location>
</feature>
<reference key="1">
    <citation type="journal article" date="2011" name="Stand. Genomic Sci.">
        <title>Complete genome sequence of Parvibaculum lavamentivorans type strain (DS-1(T)).</title>
        <authorList>
            <person name="Schleheck D."/>
            <person name="Weiss M."/>
            <person name="Pitluck S."/>
            <person name="Bruce D."/>
            <person name="Land M.L."/>
            <person name="Han S."/>
            <person name="Saunders E."/>
            <person name="Tapia R."/>
            <person name="Detter C."/>
            <person name="Brettin T."/>
            <person name="Han J."/>
            <person name="Woyke T."/>
            <person name="Goodwin L."/>
            <person name="Pennacchio L."/>
            <person name="Nolan M."/>
            <person name="Cook A.M."/>
            <person name="Kjelleberg S."/>
            <person name="Thomas T."/>
        </authorList>
    </citation>
    <scope>NUCLEOTIDE SEQUENCE [LARGE SCALE GENOMIC DNA]</scope>
    <source>
        <strain>DS-1 / DSM 13023 / NCIMB 13966</strain>
    </source>
</reference>
<evidence type="ECO:0000255" key="1">
    <source>
        <dbReference type="HAMAP-Rule" id="MF_00332"/>
    </source>
</evidence>
<evidence type="ECO:0000256" key="2">
    <source>
        <dbReference type="SAM" id="MobiDB-lite"/>
    </source>
</evidence>
<name>DNAK_PARL1</name>
<comment type="function">
    <text evidence="1">Acts as a chaperone.</text>
</comment>
<comment type="induction">
    <text evidence="1">By stress conditions e.g. heat shock.</text>
</comment>
<comment type="similarity">
    <text evidence="1">Belongs to the heat shock protein 70 family.</text>
</comment>
<dbReference type="EMBL" id="CP000774">
    <property type="protein sequence ID" value="ABS65172.1"/>
    <property type="molecule type" value="Genomic_DNA"/>
</dbReference>
<dbReference type="SMR" id="A7HZ39"/>
<dbReference type="STRING" id="402881.Plav_3574"/>
<dbReference type="KEGG" id="pla:Plav_3574"/>
<dbReference type="eggNOG" id="COG0443">
    <property type="taxonomic scope" value="Bacteria"/>
</dbReference>
<dbReference type="HOGENOM" id="CLU_005965_2_1_5"/>
<dbReference type="OrthoDB" id="9766019at2"/>
<dbReference type="Proteomes" id="UP000006377">
    <property type="component" value="Chromosome"/>
</dbReference>
<dbReference type="GO" id="GO:0005524">
    <property type="term" value="F:ATP binding"/>
    <property type="evidence" value="ECO:0007669"/>
    <property type="project" value="UniProtKB-UniRule"/>
</dbReference>
<dbReference type="GO" id="GO:0140662">
    <property type="term" value="F:ATP-dependent protein folding chaperone"/>
    <property type="evidence" value="ECO:0007669"/>
    <property type="project" value="InterPro"/>
</dbReference>
<dbReference type="GO" id="GO:0051082">
    <property type="term" value="F:unfolded protein binding"/>
    <property type="evidence" value="ECO:0007669"/>
    <property type="project" value="InterPro"/>
</dbReference>
<dbReference type="CDD" id="cd11733">
    <property type="entry name" value="ASKHA_NBD_HSP70_HSPA9"/>
    <property type="match status" value="1"/>
</dbReference>
<dbReference type="FunFam" id="2.60.34.10:FF:000014">
    <property type="entry name" value="Chaperone protein DnaK HSP70"/>
    <property type="match status" value="1"/>
</dbReference>
<dbReference type="FunFam" id="3.30.420.40:FF:000020">
    <property type="entry name" value="Chaperone protein HscA homolog"/>
    <property type="match status" value="1"/>
</dbReference>
<dbReference type="FunFam" id="1.20.1270.10:FF:000001">
    <property type="entry name" value="Molecular chaperone DnaK"/>
    <property type="match status" value="1"/>
</dbReference>
<dbReference type="FunFam" id="3.30.420.40:FF:000004">
    <property type="entry name" value="Molecular chaperone DnaK"/>
    <property type="match status" value="1"/>
</dbReference>
<dbReference type="FunFam" id="3.90.640.10:FF:000003">
    <property type="entry name" value="Molecular chaperone DnaK"/>
    <property type="match status" value="1"/>
</dbReference>
<dbReference type="Gene3D" id="1.20.1270.10">
    <property type="match status" value="1"/>
</dbReference>
<dbReference type="Gene3D" id="3.30.420.40">
    <property type="match status" value="2"/>
</dbReference>
<dbReference type="Gene3D" id="3.90.640.10">
    <property type="entry name" value="Actin, Chain A, domain 4"/>
    <property type="match status" value="1"/>
</dbReference>
<dbReference type="Gene3D" id="2.60.34.10">
    <property type="entry name" value="Substrate Binding Domain Of DNAk, Chain A, domain 1"/>
    <property type="match status" value="1"/>
</dbReference>
<dbReference type="HAMAP" id="MF_00332">
    <property type="entry name" value="DnaK"/>
    <property type="match status" value="1"/>
</dbReference>
<dbReference type="InterPro" id="IPR043129">
    <property type="entry name" value="ATPase_NBD"/>
</dbReference>
<dbReference type="InterPro" id="IPR012725">
    <property type="entry name" value="Chaperone_DnaK"/>
</dbReference>
<dbReference type="InterPro" id="IPR018181">
    <property type="entry name" value="Heat_shock_70_CS"/>
</dbReference>
<dbReference type="InterPro" id="IPR029048">
    <property type="entry name" value="HSP70_C_sf"/>
</dbReference>
<dbReference type="InterPro" id="IPR029047">
    <property type="entry name" value="HSP70_peptide-bd_sf"/>
</dbReference>
<dbReference type="InterPro" id="IPR013126">
    <property type="entry name" value="Hsp_70_fam"/>
</dbReference>
<dbReference type="NCBIfam" id="NF001413">
    <property type="entry name" value="PRK00290.1"/>
    <property type="match status" value="1"/>
</dbReference>
<dbReference type="NCBIfam" id="NF003520">
    <property type="entry name" value="PRK05183.1"/>
    <property type="match status" value="1"/>
</dbReference>
<dbReference type="NCBIfam" id="TIGR02350">
    <property type="entry name" value="prok_dnaK"/>
    <property type="match status" value="1"/>
</dbReference>
<dbReference type="PANTHER" id="PTHR19375">
    <property type="entry name" value="HEAT SHOCK PROTEIN 70KDA"/>
    <property type="match status" value="1"/>
</dbReference>
<dbReference type="Pfam" id="PF00012">
    <property type="entry name" value="HSP70"/>
    <property type="match status" value="1"/>
</dbReference>
<dbReference type="PRINTS" id="PR00301">
    <property type="entry name" value="HEATSHOCK70"/>
</dbReference>
<dbReference type="SUPFAM" id="SSF53067">
    <property type="entry name" value="Actin-like ATPase domain"/>
    <property type="match status" value="2"/>
</dbReference>
<dbReference type="SUPFAM" id="SSF100934">
    <property type="entry name" value="Heat shock protein 70kD (HSP70), C-terminal subdomain"/>
    <property type="match status" value="1"/>
</dbReference>
<dbReference type="SUPFAM" id="SSF100920">
    <property type="entry name" value="Heat shock protein 70kD (HSP70), peptide-binding domain"/>
    <property type="match status" value="1"/>
</dbReference>
<dbReference type="PROSITE" id="PS00297">
    <property type="entry name" value="HSP70_1"/>
    <property type="match status" value="1"/>
</dbReference>
<dbReference type="PROSITE" id="PS00329">
    <property type="entry name" value="HSP70_2"/>
    <property type="match status" value="1"/>
</dbReference>
<dbReference type="PROSITE" id="PS01036">
    <property type="entry name" value="HSP70_3"/>
    <property type="match status" value="1"/>
</dbReference>